<proteinExistence type="inferred from homology"/>
<comment type="function">
    <text evidence="1">Catalyzes the oxidation of 5,10-methylenetetrahydrofolate to 5,10-methenyltetrahydrofolate and then the hydrolysis of 5,10-methenyltetrahydrofolate to 10-formyltetrahydrofolate.</text>
</comment>
<comment type="catalytic activity">
    <reaction evidence="1">
        <text>(6R)-5,10-methylene-5,6,7,8-tetrahydrofolate + NADP(+) = (6R)-5,10-methenyltetrahydrofolate + NADPH</text>
        <dbReference type="Rhea" id="RHEA:22812"/>
        <dbReference type="ChEBI" id="CHEBI:15636"/>
        <dbReference type="ChEBI" id="CHEBI:57455"/>
        <dbReference type="ChEBI" id="CHEBI:57783"/>
        <dbReference type="ChEBI" id="CHEBI:58349"/>
        <dbReference type="EC" id="1.5.1.5"/>
    </reaction>
</comment>
<comment type="catalytic activity">
    <reaction evidence="1">
        <text>(6R)-5,10-methenyltetrahydrofolate + H2O = (6R)-10-formyltetrahydrofolate + H(+)</text>
        <dbReference type="Rhea" id="RHEA:23700"/>
        <dbReference type="ChEBI" id="CHEBI:15377"/>
        <dbReference type="ChEBI" id="CHEBI:15378"/>
        <dbReference type="ChEBI" id="CHEBI:57455"/>
        <dbReference type="ChEBI" id="CHEBI:195366"/>
        <dbReference type="EC" id="3.5.4.9"/>
    </reaction>
</comment>
<comment type="pathway">
    <text evidence="1">One-carbon metabolism; tetrahydrofolate interconversion.</text>
</comment>
<comment type="subunit">
    <text evidence="1">Homodimer.</text>
</comment>
<comment type="similarity">
    <text evidence="1">Belongs to the tetrahydrofolate dehydrogenase/cyclohydrolase family.</text>
</comment>
<accession>A7MT09</accession>
<protein>
    <recommendedName>
        <fullName evidence="1">Bifunctional protein FolD</fullName>
    </recommendedName>
    <domain>
        <recommendedName>
            <fullName evidence="1">Methylenetetrahydrofolate dehydrogenase</fullName>
            <ecNumber evidence="1">1.5.1.5</ecNumber>
        </recommendedName>
    </domain>
    <domain>
        <recommendedName>
            <fullName evidence="1">Methenyltetrahydrofolate cyclohydrolase</fullName>
            <ecNumber evidence="1">3.5.4.9</ecNumber>
        </recommendedName>
    </domain>
</protein>
<gene>
    <name evidence="1" type="primary">folD</name>
    <name type="ordered locus">VIBHAR_01391</name>
</gene>
<organism>
    <name type="scientific">Vibrio campbellii (strain ATCC BAA-1116)</name>
    <dbReference type="NCBI Taxonomy" id="2902295"/>
    <lineage>
        <taxon>Bacteria</taxon>
        <taxon>Pseudomonadati</taxon>
        <taxon>Pseudomonadota</taxon>
        <taxon>Gammaproteobacteria</taxon>
        <taxon>Vibrionales</taxon>
        <taxon>Vibrionaceae</taxon>
        <taxon>Vibrio</taxon>
    </lineage>
</organism>
<evidence type="ECO:0000255" key="1">
    <source>
        <dbReference type="HAMAP-Rule" id="MF_01576"/>
    </source>
</evidence>
<dbReference type="EC" id="1.5.1.5" evidence="1"/>
<dbReference type="EC" id="3.5.4.9" evidence="1"/>
<dbReference type="EMBL" id="CP000789">
    <property type="protein sequence ID" value="ABU70368.1"/>
    <property type="molecule type" value="Genomic_DNA"/>
</dbReference>
<dbReference type="RefSeq" id="WP_005430847.1">
    <property type="nucleotide sequence ID" value="NC_022269.1"/>
</dbReference>
<dbReference type="SMR" id="A7MT09"/>
<dbReference type="GeneID" id="67378021"/>
<dbReference type="KEGG" id="vha:VIBHAR_01391"/>
<dbReference type="PATRIC" id="fig|338187.25.peg.1260"/>
<dbReference type="UniPathway" id="UPA00193"/>
<dbReference type="Proteomes" id="UP000008152">
    <property type="component" value="Chromosome I"/>
</dbReference>
<dbReference type="GO" id="GO:0005829">
    <property type="term" value="C:cytosol"/>
    <property type="evidence" value="ECO:0007669"/>
    <property type="project" value="TreeGrafter"/>
</dbReference>
<dbReference type="GO" id="GO:0004477">
    <property type="term" value="F:methenyltetrahydrofolate cyclohydrolase activity"/>
    <property type="evidence" value="ECO:0007669"/>
    <property type="project" value="UniProtKB-UniRule"/>
</dbReference>
<dbReference type="GO" id="GO:0004488">
    <property type="term" value="F:methylenetetrahydrofolate dehydrogenase (NADP+) activity"/>
    <property type="evidence" value="ECO:0007669"/>
    <property type="project" value="UniProtKB-UniRule"/>
</dbReference>
<dbReference type="GO" id="GO:0000105">
    <property type="term" value="P:L-histidine biosynthetic process"/>
    <property type="evidence" value="ECO:0007669"/>
    <property type="project" value="UniProtKB-KW"/>
</dbReference>
<dbReference type="GO" id="GO:0009086">
    <property type="term" value="P:methionine biosynthetic process"/>
    <property type="evidence" value="ECO:0007669"/>
    <property type="project" value="UniProtKB-KW"/>
</dbReference>
<dbReference type="GO" id="GO:0006164">
    <property type="term" value="P:purine nucleotide biosynthetic process"/>
    <property type="evidence" value="ECO:0007669"/>
    <property type="project" value="UniProtKB-KW"/>
</dbReference>
<dbReference type="GO" id="GO:0035999">
    <property type="term" value="P:tetrahydrofolate interconversion"/>
    <property type="evidence" value="ECO:0007669"/>
    <property type="project" value="UniProtKB-UniRule"/>
</dbReference>
<dbReference type="CDD" id="cd01080">
    <property type="entry name" value="NAD_bind_m-THF_DH_Cyclohyd"/>
    <property type="match status" value="1"/>
</dbReference>
<dbReference type="FunFam" id="3.40.50.10860:FF:000001">
    <property type="entry name" value="Bifunctional protein FolD"/>
    <property type="match status" value="1"/>
</dbReference>
<dbReference type="FunFam" id="3.40.50.720:FF:000006">
    <property type="entry name" value="Bifunctional protein FolD"/>
    <property type="match status" value="1"/>
</dbReference>
<dbReference type="Gene3D" id="3.40.50.10860">
    <property type="entry name" value="Leucine Dehydrogenase, chain A, domain 1"/>
    <property type="match status" value="1"/>
</dbReference>
<dbReference type="Gene3D" id="3.40.50.720">
    <property type="entry name" value="NAD(P)-binding Rossmann-like Domain"/>
    <property type="match status" value="1"/>
</dbReference>
<dbReference type="HAMAP" id="MF_01576">
    <property type="entry name" value="THF_DHG_CYH"/>
    <property type="match status" value="1"/>
</dbReference>
<dbReference type="InterPro" id="IPR046346">
    <property type="entry name" value="Aminoacid_DH-like_N_sf"/>
</dbReference>
<dbReference type="InterPro" id="IPR036291">
    <property type="entry name" value="NAD(P)-bd_dom_sf"/>
</dbReference>
<dbReference type="InterPro" id="IPR000672">
    <property type="entry name" value="THF_DH/CycHdrlase"/>
</dbReference>
<dbReference type="InterPro" id="IPR020630">
    <property type="entry name" value="THF_DH/CycHdrlase_cat_dom"/>
</dbReference>
<dbReference type="InterPro" id="IPR020867">
    <property type="entry name" value="THF_DH/CycHdrlase_CS"/>
</dbReference>
<dbReference type="InterPro" id="IPR020631">
    <property type="entry name" value="THF_DH/CycHdrlase_NAD-bd_dom"/>
</dbReference>
<dbReference type="NCBIfam" id="NF008058">
    <property type="entry name" value="PRK10792.1"/>
    <property type="match status" value="1"/>
</dbReference>
<dbReference type="NCBIfam" id="NF010783">
    <property type="entry name" value="PRK14186.1"/>
    <property type="match status" value="1"/>
</dbReference>
<dbReference type="PANTHER" id="PTHR48099:SF5">
    <property type="entry name" value="C-1-TETRAHYDROFOLATE SYNTHASE, CYTOPLASMIC"/>
    <property type="match status" value="1"/>
</dbReference>
<dbReference type="PANTHER" id="PTHR48099">
    <property type="entry name" value="C-1-TETRAHYDROFOLATE SYNTHASE, CYTOPLASMIC-RELATED"/>
    <property type="match status" value="1"/>
</dbReference>
<dbReference type="Pfam" id="PF00763">
    <property type="entry name" value="THF_DHG_CYH"/>
    <property type="match status" value="1"/>
</dbReference>
<dbReference type="Pfam" id="PF02882">
    <property type="entry name" value="THF_DHG_CYH_C"/>
    <property type="match status" value="1"/>
</dbReference>
<dbReference type="PRINTS" id="PR00085">
    <property type="entry name" value="THFDHDRGNASE"/>
</dbReference>
<dbReference type="SUPFAM" id="SSF53223">
    <property type="entry name" value="Aminoacid dehydrogenase-like, N-terminal domain"/>
    <property type="match status" value="1"/>
</dbReference>
<dbReference type="SUPFAM" id="SSF51735">
    <property type="entry name" value="NAD(P)-binding Rossmann-fold domains"/>
    <property type="match status" value="1"/>
</dbReference>
<dbReference type="PROSITE" id="PS00766">
    <property type="entry name" value="THF_DHG_CYH_1"/>
    <property type="match status" value="1"/>
</dbReference>
<dbReference type="PROSITE" id="PS00767">
    <property type="entry name" value="THF_DHG_CYH_2"/>
    <property type="match status" value="1"/>
</dbReference>
<keyword id="KW-0028">Amino-acid biosynthesis</keyword>
<keyword id="KW-0368">Histidine biosynthesis</keyword>
<keyword id="KW-0378">Hydrolase</keyword>
<keyword id="KW-0486">Methionine biosynthesis</keyword>
<keyword id="KW-0511">Multifunctional enzyme</keyword>
<keyword id="KW-0521">NADP</keyword>
<keyword id="KW-0554">One-carbon metabolism</keyword>
<keyword id="KW-0560">Oxidoreductase</keyword>
<keyword id="KW-0658">Purine biosynthesis</keyword>
<reference key="1">
    <citation type="submission" date="2007-08" db="EMBL/GenBank/DDBJ databases">
        <authorList>
            <consortium name="The Vibrio harveyi Genome Sequencing Project"/>
            <person name="Bassler B."/>
            <person name="Clifton S.W."/>
            <person name="Fulton L."/>
            <person name="Delehaunty K."/>
            <person name="Fronick C."/>
            <person name="Harrison M."/>
            <person name="Markivic C."/>
            <person name="Fulton R."/>
            <person name="Tin-Wollam A.-M."/>
            <person name="Shah N."/>
            <person name="Pepin K."/>
            <person name="Nash W."/>
            <person name="Thiruvilangam P."/>
            <person name="Bhonagiri V."/>
            <person name="Waters C."/>
            <person name="Tu K.C."/>
            <person name="Irgon J."/>
            <person name="Wilson R.K."/>
        </authorList>
    </citation>
    <scope>NUCLEOTIDE SEQUENCE [LARGE SCALE GENOMIC DNA]</scope>
    <source>
        <strain>ATCC BAA-1116 / BB120</strain>
    </source>
</reference>
<name>FOLD_VIBC1</name>
<feature type="chain" id="PRO_1000069260" description="Bifunctional protein FolD">
    <location>
        <begin position="1"/>
        <end position="286"/>
    </location>
</feature>
<feature type="binding site" evidence="1">
    <location>
        <begin position="166"/>
        <end position="168"/>
    </location>
    <ligand>
        <name>NADP(+)</name>
        <dbReference type="ChEBI" id="CHEBI:58349"/>
    </ligand>
</feature>
<feature type="binding site" evidence="1">
    <location>
        <position position="232"/>
    </location>
    <ligand>
        <name>NADP(+)</name>
        <dbReference type="ChEBI" id="CHEBI:58349"/>
    </ligand>
</feature>
<sequence length="286" mass="30830">MTAQNIDGTLISQTVRSEVAARVKARVEAGLRAPGLAVVLVGEDPASQVYVGSKRRACEEVGFVSKSFDLPATTSEEELLALIDELNNDAEIDGILVQLPLPAGIDATHVLERIHPEKDVDGFHPYNVGRLAQRIPKLRSCTPKGIITLLDRYNIELRGKHAVVVGASNIVGRPMTLELLLAGCTTTTCHRFTKDLEGHVRQADLVVVAVGKPNFIPGEWIKKGAVVVDVGINRLESGKLVGDVEYDKARENASFITPVPGGVGPMTVASLIENTMLACEQFHTKK</sequence>